<organism evidence="4">
    <name type="scientific">Melicytus chathamicus</name>
    <name type="common">Chatham Island mahoe</name>
    <name type="synonym">Hymenanthera latifolia var. chathamica</name>
    <dbReference type="NCBI Taxonomy" id="453349"/>
    <lineage>
        <taxon>Eukaryota</taxon>
        <taxon>Viridiplantae</taxon>
        <taxon>Streptophyta</taxon>
        <taxon>Embryophyta</taxon>
        <taxon>Tracheophyta</taxon>
        <taxon>Spermatophyta</taxon>
        <taxon>Magnoliopsida</taxon>
        <taxon>eudicotyledons</taxon>
        <taxon>Gunneridae</taxon>
        <taxon>Pentapetalae</taxon>
        <taxon>rosids</taxon>
        <taxon>fabids</taxon>
        <taxon>Malpighiales</taxon>
        <taxon>Violaceae</taxon>
        <taxon>Melicytus</taxon>
    </lineage>
</organism>
<sequence length="29" mass="2989">GIPICGETCTIGTCNTPGCTCSWPVCTRD</sequence>
<accession>C0HK41</accession>
<proteinExistence type="evidence at protein level"/>
<name>CYMC7_MELCT</name>
<dbReference type="SMR" id="C0HK41"/>
<dbReference type="GO" id="GO:0006952">
    <property type="term" value="P:defense response"/>
    <property type="evidence" value="ECO:0007669"/>
    <property type="project" value="UniProtKB-KW"/>
</dbReference>
<dbReference type="InterPro" id="IPR005535">
    <property type="entry name" value="Cyclotide"/>
</dbReference>
<dbReference type="InterPro" id="IPR012324">
    <property type="entry name" value="Cyclotide_moebius_CS"/>
</dbReference>
<dbReference type="InterPro" id="IPR036146">
    <property type="entry name" value="Cyclotide_sf"/>
</dbReference>
<dbReference type="Pfam" id="PF03784">
    <property type="entry name" value="Cyclotide"/>
    <property type="match status" value="1"/>
</dbReference>
<dbReference type="PIRSF" id="PIRSF037891">
    <property type="entry name" value="Cycloviolacin"/>
    <property type="match status" value="1"/>
</dbReference>
<dbReference type="SUPFAM" id="SSF57038">
    <property type="entry name" value="Cyclotides"/>
    <property type="match status" value="1"/>
</dbReference>
<dbReference type="PROSITE" id="PS51052">
    <property type="entry name" value="CYCLOTIDE"/>
    <property type="match status" value="1"/>
</dbReference>
<dbReference type="PROSITE" id="PS60009">
    <property type="entry name" value="CYCLOTIDE_MOEBIUS"/>
    <property type="match status" value="1"/>
</dbReference>
<protein>
    <recommendedName>
        <fullName evidence="4">Cyclotide mech-7</fullName>
    </recommendedName>
</protein>
<evidence type="ECO:0000250" key="1">
    <source>
        <dbReference type="UniProtKB" id="C0HK36"/>
    </source>
</evidence>
<evidence type="ECO:0000255" key="2">
    <source>
        <dbReference type="PROSITE-ProRule" id="PRU00395"/>
    </source>
</evidence>
<evidence type="ECO:0000269" key="3">
    <source>
    </source>
</evidence>
<evidence type="ECO:0000303" key="4">
    <source>
    </source>
</evidence>
<evidence type="ECO:0000305" key="5"/>
<evidence type="ECO:0000305" key="6">
    <source>
    </source>
</evidence>
<feature type="peptide" id="PRO_0000437520" description="Cyclotide mech-7" evidence="2 3">
    <location>
        <begin position="1"/>
        <end position="29"/>
    </location>
</feature>
<feature type="disulfide bond" evidence="2">
    <location>
        <begin position="5"/>
        <end position="19"/>
    </location>
</feature>
<feature type="disulfide bond" evidence="2">
    <location>
        <begin position="9"/>
        <end position="21"/>
    </location>
</feature>
<feature type="disulfide bond" evidence="2">
    <location>
        <begin position="14"/>
        <end position="26"/>
    </location>
</feature>
<feature type="cross-link" description="Cyclopeptide (Gly-Asp)" evidence="6">
    <location>
        <begin position="1"/>
        <end position="29"/>
    </location>
</feature>
<feature type="unsure residue" description="I or L" evidence="3">
    <location>
        <position position="2"/>
    </location>
</feature>
<feature type="unsure residue" description="I or L" evidence="3">
    <location>
        <position position="4"/>
    </location>
</feature>
<feature type="unsure residue" description="I or L" evidence="3">
    <location>
        <position position="11"/>
    </location>
</feature>
<keyword id="KW-0903">Direct protein sequencing</keyword>
<keyword id="KW-1015">Disulfide bond</keyword>
<keyword id="KW-0960">Knottin</keyword>
<keyword id="KW-0611">Plant defense</keyword>
<comment type="function">
    <text evidence="1 2">Probably participates in a plant defense mechanism (Potential). Binds to and induces leakage in phospholipd membranes, particularly ones containing 1-palmitoyl-2-oleophosphatidylethanolamine (POPE) (By similarity).</text>
</comment>
<comment type="domain">
    <text evidence="5">The presence of a 'disulfide through disulfide knot' structurally defines this protein as a knottin.</text>
</comment>
<comment type="PTM">
    <text evidence="2">This is a cyclic peptide.</text>
</comment>
<comment type="PTM">
    <text evidence="3">Contains 3 disulfide bonds.</text>
</comment>
<comment type="mass spectrometry" mass="2963.18" method="Electrospray" evidence="3"/>
<comment type="similarity">
    <text evidence="2">Belongs to the cyclotide family. Moebius subfamily.</text>
</comment>
<comment type="caution">
    <text evidence="2">This peptide is cyclic. The start position was chosen by similarity to Oak1 (kalata B1) for which the DNA sequence is known.</text>
</comment>
<reference evidence="5" key="1">
    <citation type="journal article" date="2015" name="ACS Chem. Biol.">
        <title>Lysine-rich cyclotides: a new subclass of circular knotted proteins from Violaceae.</title>
        <authorList>
            <person name="Ravipati A.S."/>
            <person name="Henriques S.T."/>
            <person name="Poth A.G."/>
            <person name="Kaas Q."/>
            <person name="Wang C.K."/>
            <person name="Colgrave M.L."/>
            <person name="Craik D.J."/>
        </authorList>
    </citation>
    <scope>PROTEIN SEQUENCE</scope>
    <scope>MASS SPECTROMETRY</scope>
    <scope>PRESENCE OF DISULFIDE BONDS</scope>
    <scope>IDENTIFICATION BY MASS SPECTROMETRY</scope>
</reference>